<reference key="1">
    <citation type="journal article" date="1995" name="Insect Mol. Biol.">
        <title>Analysis of mitochondrial DNA and development of PCR-based diagnostic molecular markers for Mediterranean fruit fly (Ceratitis capitata) populations.</title>
        <authorList>
            <person name="Gasparich G.E."/>
            <person name="Sheppard W.S."/>
            <person name="Han H.Y."/>
            <person name="McPheron B.A."/>
            <person name="Steck G.J."/>
        </authorList>
    </citation>
    <scope>NUCLEOTIDE SEQUENCE [GENOMIC DNA]</scope>
    <source>
        <strain>Hawaii laboratory colony</strain>
    </source>
</reference>
<keyword id="KW-0249">Electron transport</keyword>
<keyword id="KW-0472">Membrane</keyword>
<keyword id="KW-0496">Mitochondrion</keyword>
<keyword id="KW-0999">Mitochondrion inner membrane</keyword>
<keyword id="KW-0520">NAD</keyword>
<keyword id="KW-0679">Respiratory chain</keyword>
<keyword id="KW-1278">Translocase</keyword>
<keyword id="KW-0812">Transmembrane</keyword>
<keyword id="KW-1133">Transmembrane helix</keyword>
<keyword id="KW-0813">Transport</keyword>
<keyword id="KW-0830">Ubiquinone</keyword>
<gene>
    <name type="primary">ND5</name>
</gene>
<proteinExistence type="inferred from homology"/>
<sequence>MCSISFLVLVSISFSMFLLSLNFMLNEYCVFLEWEVVSLNSSGIVMTFLFDWMSLLFMSFVLLISSLVIYYSKEYINSSY</sequence>
<evidence type="ECO:0000250" key="1"/>
<evidence type="ECO:0000255" key="2"/>
<evidence type="ECO:0000305" key="3"/>
<accession>Q34052</accession>
<geneLocation type="mitochondrion"/>
<name>NU5M_CERCA</name>
<comment type="function">
    <text evidence="1">Core subunit of the mitochondrial membrane respiratory chain NADH dehydrogenase (Complex I) that is believed to belong to the minimal assembly required for catalysis. Complex I functions in the transfer of electrons from NADH to the respiratory chain. The immediate electron acceptor for the enzyme is believed to be ubiquinone (By similarity).</text>
</comment>
<comment type="catalytic activity">
    <reaction>
        <text>a ubiquinone + NADH + 5 H(+)(in) = a ubiquinol + NAD(+) + 4 H(+)(out)</text>
        <dbReference type="Rhea" id="RHEA:29091"/>
        <dbReference type="Rhea" id="RHEA-COMP:9565"/>
        <dbReference type="Rhea" id="RHEA-COMP:9566"/>
        <dbReference type="ChEBI" id="CHEBI:15378"/>
        <dbReference type="ChEBI" id="CHEBI:16389"/>
        <dbReference type="ChEBI" id="CHEBI:17976"/>
        <dbReference type="ChEBI" id="CHEBI:57540"/>
        <dbReference type="ChEBI" id="CHEBI:57945"/>
        <dbReference type="EC" id="7.1.1.2"/>
    </reaction>
</comment>
<comment type="subcellular location">
    <subcellularLocation>
        <location evidence="1">Mitochondrion inner membrane</location>
        <topology evidence="1">Multi-pass membrane protein</topology>
    </subcellularLocation>
</comment>
<comment type="similarity">
    <text evidence="3">Belongs to the complex I subunit 5 family.</text>
</comment>
<feature type="chain" id="PRO_0000118076" description="NADH-ubiquinone oxidoreductase chain 5">
    <location>
        <begin position="1"/>
        <end position="80" status="greater than"/>
    </location>
</feature>
<feature type="transmembrane region" description="Helical" evidence="2">
    <location>
        <begin position="4"/>
        <end position="24"/>
    </location>
</feature>
<feature type="transmembrane region" description="Helical" evidence="2">
    <location>
        <begin position="44"/>
        <end position="64"/>
    </location>
</feature>
<feature type="non-terminal residue">
    <location>
        <position position="80"/>
    </location>
</feature>
<dbReference type="EC" id="7.1.1.2"/>
<dbReference type="EMBL" id="U12924">
    <property type="protein sequence ID" value="AAA85795.1"/>
    <property type="molecule type" value="Genomic_DNA"/>
</dbReference>
<dbReference type="SMR" id="Q34052"/>
<dbReference type="OrthoDB" id="10069788at2759"/>
<dbReference type="GO" id="GO:0005743">
    <property type="term" value="C:mitochondrial inner membrane"/>
    <property type="evidence" value="ECO:0007669"/>
    <property type="project" value="UniProtKB-SubCell"/>
</dbReference>
<dbReference type="GO" id="GO:0008137">
    <property type="term" value="F:NADH dehydrogenase (ubiquinone) activity"/>
    <property type="evidence" value="ECO:0007669"/>
    <property type="project" value="UniProtKB-EC"/>
</dbReference>
<dbReference type="InterPro" id="IPR001516">
    <property type="entry name" value="Proton_antipo_N"/>
</dbReference>
<dbReference type="Pfam" id="PF00662">
    <property type="entry name" value="Proton_antipo_N"/>
    <property type="match status" value="1"/>
</dbReference>
<protein>
    <recommendedName>
        <fullName>NADH-ubiquinone oxidoreductase chain 5</fullName>
        <ecNumber>7.1.1.2</ecNumber>
    </recommendedName>
    <alternativeName>
        <fullName>NADH dehydrogenase subunit 5</fullName>
    </alternativeName>
</protein>
<organism>
    <name type="scientific">Ceratitis capitata</name>
    <name type="common">Mediterranean fruit fly</name>
    <name type="synonym">Tephritis capitata</name>
    <dbReference type="NCBI Taxonomy" id="7213"/>
    <lineage>
        <taxon>Eukaryota</taxon>
        <taxon>Metazoa</taxon>
        <taxon>Ecdysozoa</taxon>
        <taxon>Arthropoda</taxon>
        <taxon>Hexapoda</taxon>
        <taxon>Insecta</taxon>
        <taxon>Pterygota</taxon>
        <taxon>Neoptera</taxon>
        <taxon>Endopterygota</taxon>
        <taxon>Diptera</taxon>
        <taxon>Brachycera</taxon>
        <taxon>Muscomorpha</taxon>
        <taxon>Tephritoidea</taxon>
        <taxon>Tephritidae</taxon>
        <taxon>Ceratitis</taxon>
        <taxon>Ceratitis</taxon>
    </lineage>
</organism>